<protein>
    <recommendedName>
        <fullName evidence="1">Glyoxylate/hydroxypyruvate reductase A</fullName>
        <ecNumber evidence="1">1.1.1.79</ecNumber>
        <ecNumber evidence="1">1.1.1.81</ecNumber>
    </recommendedName>
    <alternativeName>
        <fullName evidence="1">2-ketoacid reductase</fullName>
    </alternativeName>
</protein>
<organism>
    <name type="scientific">Salmonella typhimurium (strain LT2 / SGSC1412 / ATCC 700720)</name>
    <dbReference type="NCBI Taxonomy" id="99287"/>
    <lineage>
        <taxon>Bacteria</taxon>
        <taxon>Pseudomonadati</taxon>
        <taxon>Pseudomonadota</taxon>
        <taxon>Gammaproteobacteria</taxon>
        <taxon>Enterobacterales</taxon>
        <taxon>Enterobacteriaceae</taxon>
        <taxon>Salmonella</taxon>
    </lineage>
</organism>
<evidence type="ECO:0000255" key="1">
    <source>
        <dbReference type="HAMAP-Rule" id="MF_01666"/>
    </source>
</evidence>
<evidence type="ECO:0007829" key="2">
    <source>
        <dbReference type="PDB" id="3KBO"/>
    </source>
</evidence>
<evidence type="ECO:0007829" key="3">
    <source>
        <dbReference type="PDB" id="3PP8"/>
    </source>
</evidence>
<dbReference type="EC" id="1.1.1.79" evidence="1"/>
<dbReference type="EC" id="1.1.1.81" evidence="1"/>
<dbReference type="EMBL" id="AE006468">
    <property type="protein sequence ID" value="AAL20065.1"/>
    <property type="molecule type" value="Genomic_DNA"/>
</dbReference>
<dbReference type="RefSeq" id="WP_000402556.1">
    <property type="nucleotide sequence ID" value="NC_003197.2"/>
</dbReference>
<dbReference type="PDB" id="3KBO">
    <property type="method" value="X-ray"/>
    <property type="resolution" value="2.14 A"/>
    <property type="chains" value="A/B/C/D=1-312"/>
</dbReference>
<dbReference type="PDB" id="3PP8">
    <property type="method" value="X-ray"/>
    <property type="resolution" value="2.10 A"/>
    <property type="chains" value="A=1-312"/>
</dbReference>
<dbReference type="PDBsum" id="3KBO"/>
<dbReference type="PDBsum" id="3PP8"/>
<dbReference type="SMR" id="Q8ZQ30"/>
<dbReference type="STRING" id="99287.STM1135"/>
<dbReference type="PaxDb" id="99287-STM1135"/>
<dbReference type="DNASU" id="1252653"/>
<dbReference type="KEGG" id="stm:STM1135"/>
<dbReference type="PATRIC" id="fig|99287.12.peg.1202"/>
<dbReference type="HOGENOM" id="CLU_019796_1_0_6"/>
<dbReference type="OMA" id="VQMAEYV"/>
<dbReference type="PhylomeDB" id="Q8ZQ30"/>
<dbReference type="BioCyc" id="SENT99287:STM1135-MONOMER"/>
<dbReference type="EvolutionaryTrace" id="Q8ZQ30"/>
<dbReference type="Proteomes" id="UP000001014">
    <property type="component" value="Chromosome"/>
</dbReference>
<dbReference type="GO" id="GO:0005829">
    <property type="term" value="C:cytosol"/>
    <property type="evidence" value="ECO:0000318"/>
    <property type="project" value="GO_Central"/>
</dbReference>
<dbReference type="GO" id="GO:0030267">
    <property type="term" value="F:glyoxylate reductase (NADPH) activity"/>
    <property type="evidence" value="ECO:0000318"/>
    <property type="project" value="GO_Central"/>
</dbReference>
<dbReference type="GO" id="GO:0008465">
    <property type="term" value="F:hydroxypyruvate reductase (NADH) activity"/>
    <property type="evidence" value="ECO:0007669"/>
    <property type="project" value="RHEA"/>
</dbReference>
<dbReference type="GO" id="GO:0120509">
    <property type="term" value="F:hydroxypyruvate reductase (NADPH) activity"/>
    <property type="evidence" value="ECO:0007669"/>
    <property type="project" value="RHEA"/>
</dbReference>
<dbReference type="GO" id="GO:0016618">
    <property type="term" value="F:hydroxypyruvate reductase [NAD(P)H] activity"/>
    <property type="evidence" value="ECO:0000318"/>
    <property type="project" value="GO_Central"/>
</dbReference>
<dbReference type="GO" id="GO:0051287">
    <property type="term" value="F:NAD binding"/>
    <property type="evidence" value="ECO:0007669"/>
    <property type="project" value="InterPro"/>
</dbReference>
<dbReference type="CDD" id="cd12164">
    <property type="entry name" value="GDH_like_2"/>
    <property type="match status" value="1"/>
</dbReference>
<dbReference type="FunFam" id="3.40.50.720:FF:000110">
    <property type="entry name" value="Glyoxylate/hydroxypyruvate reductase A"/>
    <property type="match status" value="1"/>
</dbReference>
<dbReference type="Gene3D" id="3.40.50.720">
    <property type="entry name" value="NAD(P)-binding Rossmann-like Domain"/>
    <property type="match status" value="2"/>
</dbReference>
<dbReference type="HAMAP" id="MF_01666">
    <property type="entry name" value="2_Hacid_dh_C_GhrA"/>
    <property type="match status" value="1"/>
</dbReference>
<dbReference type="InterPro" id="IPR006140">
    <property type="entry name" value="D-isomer_DH_NAD-bd"/>
</dbReference>
<dbReference type="InterPro" id="IPR023514">
    <property type="entry name" value="GhrA_Enterobacterales"/>
</dbReference>
<dbReference type="InterPro" id="IPR036291">
    <property type="entry name" value="NAD(P)-bd_dom_sf"/>
</dbReference>
<dbReference type="NCBIfam" id="NF012013">
    <property type="entry name" value="PRK15469.1"/>
    <property type="match status" value="1"/>
</dbReference>
<dbReference type="PANTHER" id="PTHR43333">
    <property type="entry name" value="2-HACID_DH_C DOMAIN-CONTAINING PROTEIN"/>
    <property type="match status" value="1"/>
</dbReference>
<dbReference type="PANTHER" id="PTHR43333:SF1">
    <property type="entry name" value="D-ISOMER SPECIFIC 2-HYDROXYACID DEHYDROGENASE NAD-BINDING DOMAIN-CONTAINING PROTEIN"/>
    <property type="match status" value="1"/>
</dbReference>
<dbReference type="Pfam" id="PF02826">
    <property type="entry name" value="2-Hacid_dh_C"/>
    <property type="match status" value="1"/>
</dbReference>
<dbReference type="SUPFAM" id="SSF51735">
    <property type="entry name" value="NAD(P)-binding Rossmann-fold domains"/>
    <property type="match status" value="1"/>
</dbReference>
<sequence length="312" mass="35034">MEIIFYHPTFNAAWWVNALEKALPHARVREWKVGDNNPADYALVWQPPVEMLAGRRLKAVFVLGAGVDAILSKLNAHPEMLDASIPLFRLEDTGMGLQMQEYAVSQVLHWFRRFDDYQALKNQALWKPLPEYTREEFSVGIMGAGVLGAKVAESLQAWGFPLRCWSRSRKSWPGVESYVGREELRAFLNQTRVLINLLPNTAQTVGIINSELLDQLPDGAYVLNLARGVHVQEADLLAALDSGKLKGAMLDVFSQEPLPQESPLWRHPRVAMTPHIAAVTRPAEAIDYISRTITQLEKGEPVTGQVDRARGY</sequence>
<name>GHRA_SALTY</name>
<accession>Q8ZQ30</accession>
<proteinExistence type="evidence at protein level"/>
<keyword id="KW-0002">3D-structure</keyword>
<keyword id="KW-0963">Cytoplasm</keyword>
<keyword id="KW-0520">NAD</keyword>
<keyword id="KW-0521">NADP</keyword>
<keyword id="KW-0560">Oxidoreductase</keyword>
<keyword id="KW-1185">Reference proteome</keyword>
<comment type="function">
    <text evidence="1">Catalyzes the NADPH-dependent reduction of glyoxylate and hydroxypyruvate into glycolate and glycerate, respectively.</text>
</comment>
<comment type="catalytic activity">
    <reaction evidence="1">
        <text>glycolate + NADP(+) = glyoxylate + NADPH + H(+)</text>
        <dbReference type="Rhea" id="RHEA:10992"/>
        <dbReference type="ChEBI" id="CHEBI:15378"/>
        <dbReference type="ChEBI" id="CHEBI:29805"/>
        <dbReference type="ChEBI" id="CHEBI:36655"/>
        <dbReference type="ChEBI" id="CHEBI:57783"/>
        <dbReference type="ChEBI" id="CHEBI:58349"/>
        <dbReference type="EC" id="1.1.1.79"/>
    </reaction>
</comment>
<comment type="catalytic activity">
    <reaction evidence="1">
        <text>(R)-glycerate + NAD(+) = 3-hydroxypyruvate + NADH + H(+)</text>
        <dbReference type="Rhea" id="RHEA:17905"/>
        <dbReference type="ChEBI" id="CHEBI:15378"/>
        <dbReference type="ChEBI" id="CHEBI:16659"/>
        <dbReference type="ChEBI" id="CHEBI:17180"/>
        <dbReference type="ChEBI" id="CHEBI:57540"/>
        <dbReference type="ChEBI" id="CHEBI:57945"/>
        <dbReference type="EC" id="1.1.1.81"/>
    </reaction>
</comment>
<comment type="catalytic activity">
    <reaction evidence="1">
        <text>(R)-glycerate + NADP(+) = 3-hydroxypyruvate + NADPH + H(+)</text>
        <dbReference type="Rhea" id="RHEA:18657"/>
        <dbReference type="ChEBI" id="CHEBI:15378"/>
        <dbReference type="ChEBI" id="CHEBI:16659"/>
        <dbReference type="ChEBI" id="CHEBI:17180"/>
        <dbReference type="ChEBI" id="CHEBI:57783"/>
        <dbReference type="ChEBI" id="CHEBI:58349"/>
        <dbReference type="EC" id="1.1.1.81"/>
    </reaction>
</comment>
<comment type="subcellular location">
    <subcellularLocation>
        <location evidence="1">Cytoplasm</location>
    </subcellularLocation>
</comment>
<comment type="similarity">
    <text evidence="1">Belongs to the D-isomer specific 2-hydroxyacid dehydrogenase family. GhrA subfamily.</text>
</comment>
<gene>
    <name evidence="1" type="primary">ghrA</name>
    <name type="ordered locus">STM1135</name>
</gene>
<feature type="chain" id="PRO_0000348372" description="Glyoxylate/hydroxypyruvate reductase A">
    <location>
        <begin position="1"/>
        <end position="312"/>
    </location>
</feature>
<feature type="active site" evidence="1">
    <location>
        <position position="227"/>
    </location>
</feature>
<feature type="active site" description="Proton donor" evidence="1">
    <location>
        <position position="275"/>
    </location>
</feature>
<feature type="strand" evidence="3">
    <location>
        <begin position="1"/>
        <end position="6"/>
    </location>
</feature>
<feature type="strand" evidence="3">
    <location>
        <begin position="8"/>
        <end position="10"/>
    </location>
</feature>
<feature type="helix" evidence="3">
    <location>
        <begin position="12"/>
        <end position="22"/>
    </location>
</feature>
<feature type="strand" evidence="3">
    <location>
        <begin position="26"/>
        <end position="30"/>
    </location>
</feature>
<feature type="strand" evidence="3">
    <location>
        <begin position="40"/>
        <end position="46"/>
    </location>
</feature>
<feature type="helix" evidence="3">
    <location>
        <begin position="49"/>
        <end position="52"/>
    </location>
</feature>
<feature type="strand" evidence="3">
    <location>
        <begin position="58"/>
        <end position="65"/>
    </location>
</feature>
<feature type="helix" evidence="3">
    <location>
        <begin position="68"/>
        <end position="76"/>
    </location>
</feature>
<feature type="helix" evidence="2">
    <location>
        <begin position="78"/>
        <end position="80"/>
    </location>
</feature>
<feature type="strand" evidence="3">
    <location>
        <begin position="87"/>
        <end position="89"/>
    </location>
</feature>
<feature type="helix" evidence="3">
    <location>
        <begin position="96"/>
        <end position="111"/>
    </location>
</feature>
<feature type="helix" evidence="3">
    <location>
        <begin position="114"/>
        <end position="122"/>
    </location>
</feature>
<feature type="helix" evidence="2">
    <location>
        <begin position="134"/>
        <end position="136"/>
    </location>
</feature>
<feature type="strand" evidence="3">
    <location>
        <begin position="139"/>
        <end position="142"/>
    </location>
</feature>
<feature type="helix" evidence="3">
    <location>
        <begin position="146"/>
        <end position="156"/>
    </location>
</feature>
<feature type="turn" evidence="3">
    <location>
        <begin position="157"/>
        <end position="159"/>
    </location>
</feature>
<feature type="strand" evidence="3">
    <location>
        <begin position="162"/>
        <end position="168"/>
    </location>
</feature>
<feature type="strand" evidence="3">
    <location>
        <begin position="176"/>
        <end position="180"/>
    </location>
</feature>
<feature type="helix" evidence="3">
    <location>
        <begin position="181"/>
        <end position="189"/>
    </location>
</feature>
<feature type="strand" evidence="3">
    <location>
        <begin position="192"/>
        <end position="196"/>
    </location>
</feature>
<feature type="helix" evidence="3">
    <location>
        <begin position="202"/>
        <end position="204"/>
    </location>
</feature>
<feature type="helix" evidence="3">
    <location>
        <begin position="210"/>
        <end position="213"/>
    </location>
</feature>
<feature type="strand" evidence="3">
    <location>
        <begin position="220"/>
        <end position="224"/>
    </location>
</feature>
<feature type="helix" evidence="3">
    <location>
        <begin position="228"/>
        <end position="230"/>
    </location>
</feature>
<feature type="helix" evidence="3">
    <location>
        <begin position="233"/>
        <end position="241"/>
    </location>
</feature>
<feature type="strand" evidence="3">
    <location>
        <begin position="244"/>
        <end position="251"/>
    </location>
</feature>
<feature type="strand" evidence="3">
    <location>
        <begin position="254"/>
        <end position="257"/>
    </location>
</feature>
<feature type="helix" evidence="3">
    <location>
        <begin position="263"/>
        <end position="266"/>
    </location>
</feature>
<feature type="strand" evidence="3">
    <location>
        <begin position="270"/>
        <end position="272"/>
    </location>
</feature>
<feature type="helix" evidence="3">
    <location>
        <begin position="282"/>
        <end position="298"/>
    </location>
</feature>
<feature type="turn" evidence="2">
    <location>
        <begin position="308"/>
        <end position="311"/>
    </location>
</feature>
<reference key="1">
    <citation type="journal article" date="2001" name="Nature">
        <title>Complete genome sequence of Salmonella enterica serovar Typhimurium LT2.</title>
        <authorList>
            <person name="McClelland M."/>
            <person name="Sanderson K.E."/>
            <person name="Spieth J."/>
            <person name="Clifton S.W."/>
            <person name="Latreille P."/>
            <person name="Courtney L."/>
            <person name="Porwollik S."/>
            <person name="Ali J."/>
            <person name="Dante M."/>
            <person name="Du F."/>
            <person name="Hou S."/>
            <person name="Layman D."/>
            <person name="Leonard S."/>
            <person name="Nguyen C."/>
            <person name="Scott K."/>
            <person name="Holmes A."/>
            <person name="Grewal N."/>
            <person name="Mulvaney E."/>
            <person name="Ryan E."/>
            <person name="Sun H."/>
            <person name="Florea L."/>
            <person name="Miller W."/>
            <person name="Stoneking T."/>
            <person name="Nhan M."/>
            <person name="Waterston R."/>
            <person name="Wilson R.K."/>
        </authorList>
    </citation>
    <scope>NUCLEOTIDE SEQUENCE [LARGE SCALE GENOMIC DNA]</scope>
    <source>
        <strain>LT2 / SGSC1412 / ATCC 700720</strain>
    </source>
</reference>